<evidence type="ECO:0000250" key="1"/>
<evidence type="ECO:0000250" key="2">
    <source>
        <dbReference type="UniProtKB" id="Q13155"/>
    </source>
</evidence>
<evidence type="ECO:0000250" key="3">
    <source>
        <dbReference type="UniProtKB" id="Q8R010"/>
    </source>
</evidence>
<evidence type="ECO:0000256" key="4">
    <source>
        <dbReference type="SAM" id="MobiDB-lite"/>
    </source>
</evidence>
<keyword id="KW-0053">Apoptosis</keyword>
<keyword id="KW-0963">Cytoplasm</keyword>
<keyword id="KW-0217">Developmental protein</keyword>
<keyword id="KW-0221">Differentiation</keyword>
<keyword id="KW-0539">Nucleus</keyword>
<keyword id="KW-0597">Phosphoprotein</keyword>
<keyword id="KW-0648">Protein biosynthesis</keyword>
<keyword id="KW-1185">Reference proteome</keyword>
<keyword id="KW-0832">Ubl conjugation</keyword>
<reference key="1">
    <citation type="journal article" date="2004" name="Genome Res.">
        <title>The status, quality, and expansion of the NIH full-length cDNA project: the Mammalian Gene Collection (MGC).</title>
        <authorList>
            <consortium name="The MGC Project Team"/>
        </authorList>
    </citation>
    <scope>NUCLEOTIDE SEQUENCE [LARGE SCALE MRNA]</scope>
    <source>
        <tissue>Thymus</tissue>
    </source>
</reference>
<organism>
    <name type="scientific">Rattus norvegicus</name>
    <name type="common">Rat</name>
    <dbReference type="NCBI Taxonomy" id="10116"/>
    <lineage>
        <taxon>Eukaryota</taxon>
        <taxon>Metazoa</taxon>
        <taxon>Chordata</taxon>
        <taxon>Craniata</taxon>
        <taxon>Vertebrata</taxon>
        <taxon>Euteleostomi</taxon>
        <taxon>Mammalia</taxon>
        <taxon>Eutheria</taxon>
        <taxon>Euarchontoglires</taxon>
        <taxon>Glires</taxon>
        <taxon>Rodentia</taxon>
        <taxon>Myomorpha</taxon>
        <taxon>Muroidea</taxon>
        <taxon>Muridae</taxon>
        <taxon>Murinae</taxon>
        <taxon>Rattus</taxon>
    </lineage>
</organism>
<sequence>MPMYQVKPYHGGSAPLRVELPTCMYRLPNVHSKTTSPATDAGHVQEPSEPSLRALESRQDDILKRLYELKAAVDGLSKMIHTPDADLDVTNILQADEPTTLTTNALDLNSVLGKDYGALKDIVINANPASPPLSLLVLHRLLCERYRVLSTVHTHSSVKNVPENLLKCFGEQARKQSRHEYQLGFTLIWKNVPKTQMKFSVQTMCPIEGEGNIARFLFSLFGQKHNAVHLTLIDSWVDIAMFQLREGSSKEKAAVFRSMNSALGKSPWLVGNELTVADVVLWSVLQQTGGSSGAAPTNVQRWLKSCENLAPFSTALQLLK</sequence>
<feature type="chain" id="PRO_0000316842" description="Aminoacyl tRNA synthase complex-interacting multifunctional protein 2">
    <location>
        <begin position="1"/>
        <end position="320"/>
    </location>
</feature>
<feature type="domain" description="GST C-terminal">
    <location>
        <begin position="220"/>
        <end position="317"/>
    </location>
</feature>
<feature type="region of interest" description="Disordered" evidence="4">
    <location>
        <begin position="31"/>
        <end position="51"/>
    </location>
</feature>
<feature type="region of interest" description="Interaction with PRKN" evidence="1">
    <location>
        <begin position="82"/>
        <end position="162"/>
    </location>
</feature>
<feature type="region of interest" description="Interaction with TP53" evidence="1">
    <location>
        <begin position="162"/>
        <end position="225"/>
    </location>
</feature>
<feature type="modified residue" description="Phosphoserine" evidence="3">
    <location>
        <position position="36"/>
    </location>
</feature>
<name>AIMP2_RAT</name>
<comment type="function">
    <text evidence="2">Required for assembly and stability of the aminoacyl-tRNA synthase complex. Mediates ubiquitination and degradation of FUBP1, a transcriptional activator of MYC, leading to MYC down-regulation which is required for aveolar type II cell differentiation. Blocks MDM2-mediated ubiquitination and degradation of p53/TP53. Functions as a proapoptotic factor.</text>
</comment>
<comment type="subunit">
    <text evidence="2">Part of the multisynthetase complex (MSC), a multisubunit complex that groups tRNA ligases for Arg (RARS1), Asp (DARS1), Gln (QARS1), Ile (IARS1), Leu (LARS1), Lys (KARS1), Met (MARS1) the bifunctional ligase for Glu and Pro (EPRS1) and the auxiliary subunits AIMP1/p43, AIMP2/p38 and EEF1E1/p18. Interacts (via N-terminus) with KARS1. Interacts with EPRS1. Forms a linear complex that contains MARS1, EEF1E1, EPRS1 and AIMP2 that is at the core of the multisubunit complex. Binds FUBP1 (via C-terminus). Interacts in both its unphosphorylated and phosphorylated forms with p53/TP53 (via N-terminus) in the nucleus following UV irradiation. Interacts (via N-terminus) with PRKN/parkin (via first RING-type domain). Interacts with TARS3.</text>
</comment>
<comment type="subcellular location">
    <subcellularLocation>
        <location evidence="3">Cytoplasm</location>
        <location evidence="3">Cytosol</location>
    </subcellularLocation>
    <subcellularLocation>
        <location evidence="3">Nucleus</location>
    </subcellularLocation>
    <text evidence="3">Following DNA damage, dissociates from the aminoacyl-tRNA synthase complex and translocates from the cytoplasm to the nucleus.</text>
</comment>
<comment type="PTM">
    <text evidence="1">Phosphorylated on serine residues in response to UV irradiation.</text>
</comment>
<comment type="PTM">
    <text evidence="1">Ubiquitinated by PRKN, leading to its degradation by the proteasome.</text>
</comment>
<accession>Q32PX2</accession>
<proteinExistence type="evidence at transcript level"/>
<gene>
    <name type="primary">Aimp2</name>
    <name type="synonym">Jtv1</name>
</gene>
<dbReference type="EMBL" id="BC107947">
    <property type="protein sequence ID" value="AAI07948.1"/>
    <property type="molecule type" value="mRNA"/>
</dbReference>
<dbReference type="RefSeq" id="NP_001032425.1">
    <property type="nucleotide sequence ID" value="NM_001037348.1"/>
</dbReference>
<dbReference type="SMR" id="Q32PX2"/>
<dbReference type="BioGRID" id="252567">
    <property type="interactions" value="1"/>
</dbReference>
<dbReference type="FunCoup" id="Q32PX2">
    <property type="interactions" value="2329"/>
</dbReference>
<dbReference type="IntAct" id="Q32PX2">
    <property type="interactions" value="1"/>
</dbReference>
<dbReference type="STRING" id="10116.ENSRNOP00000001379"/>
<dbReference type="iPTMnet" id="Q32PX2"/>
<dbReference type="PhosphoSitePlus" id="Q32PX2"/>
<dbReference type="jPOST" id="Q32PX2"/>
<dbReference type="PaxDb" id="10116-ENSRNOP00000001379"/>
<dbReference type="GeneID" id="288480"/>
<dbReference type="KEGG" id="rno:288480"/>
<dbReference type="AGR" id="RGD:1560787"/>
<dbReference type="CTD" id="7965"/>
<dbReference type="RGD" id="1560787">
    <property type="gene designation" value="Aimp2"/>
</dbReference>
<dbReference type="VEuPathDB" id="HostDB:ENSRNOG00000001044"/>
<dbReference type="eggNOG" id="ENOG502QUNJ">
    <property type="taxonomic scope" value="Eukaryota"/>
</dbReference>
<dbReference type="HOGENOM" id="CLU_076114_0_0_1"/>
<dbReference type="InParanoid" id="Q32PX2"/>
<dbReference type="OrthoDB" id="2309723at2759"/>
<dbReference type="PhylomeDB" id="Q32PX2"/>
<dbReference type="TreeFam" id="TF326322"/>
<dbReference type="Reactome" id="R-RNO-9856649">
    <property type="pathway name" value="Transcriptional and post-translational regulation of MITF-M expression and activity"/>
</dbReference>
<dbReference type="PRO" id="PR:Q32PX2"/>
<dbReference type="Proteomes" id="UP000002494">
    <property type="component" value="Chromosome 12"/>
</dbReference>
<dbReference type="Bgee" id="ENSRNOG00000001044">
    <property type="expression patterns" value="Expressed in skeletal muscle tissue and 20 other cell types or tissues"/>
</dbReference>
<dbReference type="ExpressionAtlas" id="Q32PX2">
    <property type="expression patterns" value="baseline and differential"/>
</dbReference>
<dbReference type="GO" id="GO:0017101">
    <property type="term" value="C:aminoacyl-tRNA synthetase multienzyme complex"/>
    <property type="evidence" value="ECO:0000314"/>
    <property type="project" value="CAFA"/>
</dbReference>
<dbReference type="GO" id="GO:0005829">
    <property type="term" value="C:cytosol"/>
    <property type="evidence" value="ECO:0000266"/>
    <property type="project" value="RGD"/>
</dbReference>
<dbReference type="GO" id="GO:0005634">
    <property type="term" value="C:nucleus"/>
    <property type="evidence" value="ECO:0000266"/>
    <property type="project" value="RGD"/>
</dbReference>
<dbReference type="GO" id="GO:0060090">
    <property type="term" value="F:molecular adaptor activity"/>
    <property type="evidence" value="ECO:0000266"/>
    <property type="project" value="RGD"/>
</dbReference>
<dbReference type="GO" id="GO:0006915">
    <property type="term" value="P:apoptotic process"/>
    <property type="evidence" value="ECO:0007669"/>
    <property type="project" value="UniProtKB-KW"/>
</dbReference>
<dbReference type="GO" id="GO:0008285">
    <property type="term" value="P:negative regulation of cell population proliferation"/>
    <property type="evidence" value="ECO:0000266"/>
    <property type="project" value="RGD"/>
</dbReference>
<dbReference type="GO" id="GO:0043525">
    <property type="term" value="P:positive regulation of neuron apoptotic process"/>
    <property type="evidence" value="ECO:0000314"/>
    <property type="project" value="MGI"/>
</dbReference>
<dbReference type="GO" id="GO:0031398">
    <property type="term" value="P:positive regulation of protein ubiquitination"/>
    <property type="evidence" value="ECO:0000266"/>
    <property type="project" value="RGD"/>
</dbReference>
<dbReference type="GO" id="GO:0016567">
    <property type="term" value="P:protein ubiquitination"/>
    <property type="evidence" value="ECO:0000266"/>
    <property type="project" value="RGD"/>
</dbReference>
<dbReference type="GO" id="GO:0065003">
    <property type="term" value="P:protein-containing complex assembly"/>
    <property type="evidence" value="ECO:0000266"/>
    <property type="project" value="RGD"/>
</dbReference>
<dbReference type="GO" id="GO:0006412">
    <property type="term" value="P:translation"/>
    <property type="evidence" value="ECO:0007669"/>
    <property type="project" value="UniProtKB-KW"/>
</dbReference>
<dbReference type="GO" id="GO:0060510">
    <property type="term" value="P:type II pneumocyte differentiation"/>
    <property type="evidence" value="ECO:0000266"/>
    <property type="project" value="RGD"/>
</dbReference>
<dbReference type="CDD" id="cd03200">
    <property type="entry name" value="GST_C_AIMP2"/>
    <property type="match status" value="1"/>
</dbReference>
<dbReference type="FunFam" id="1.20.1050.130:FF:000002">
    <property type="entry name" value="aminoacyl tRNA synthase complex-interacting multifunctional protein 2 isoform X2"/>
    <property type="match status" value="1"/>
</dbReference>
<dbReference type="Gene3D" id="1.20.1050.130">
    <property type="match status" value="1"/>
</dbReference>
<dbReference type="InterPro" id="IPR042360">
    <property type="entry name" value="AIMP2"/>
</dbReference>
<dbReference type="InterPro" id="IPR031889">
    <property type="entry name" value="AIMP2_LysRS-bd"/>
</dbReference>
<dbReference type="InterPro" id="IPR041503">
    <property type="entry name" value="AIMP2_thioredoxin"/>
</dbReference>
<dbReference type="InterPro" id="IPR036282">
    <property type="entry name" value="Glutathione-S-Trfase_C_sf"/>
</dbReference>
<dbReference type="InterPro" id="IPR004046">
    <property type="entry name" value="GST_C"/>
</dbReference>
<dbReference type="PANTHER" id="PTHR13438">
    <property type="entry name" value="AMINOACYL TRNA SYNTHASE COMPLEX-INTERACTING MULTIFUNCTIONAL PROTEIN"/>
    <property type="match status" value="1"/>
</dbReference>
<dbReference type="PANTHER" id="PTHR13438:SF2">
    <property type="entry name" value="AMINOACYL TRNA SYNTHASE COMPLEX-INTERACTING MULTIFUNCTIONAL PROTEIN 2"/>
    <property type="match status" value="1"/>
</dbReference>
<dbReference type="Pfam" id="PF16780">
    <property type="entry name" value="AIMP2_LysRS_bd"/>
    <property type="match status" value="1"/>
</dbReference>
<dbReference type="Pfam" id="PF00043">
    <property type="entry name" value="GST_C"/>
    <property type="match status" value="1"/>
</dbReference>
<dbReference type="Pfam" id="PF18569">
    <property type="entry name" value="Thioredoxin_16"/>
    <property type="match status" value="1"/>
</dbReference>
<dbReference type="SUPFAM" id="SSF47616">
    <property type="entry name" value="GST C-terminal domain-like"/>
    <property type="match status" value="1"/>
</dbReference>
<protein>
    <recommendedName>
        <fullName>Aminoacyl tRNA synthase complex-interacting multifunctional protein 2</fullName>
    </recommendedName>
    <alternativeName>
        <fullName>Multisynthase complex auxiliary component p38</fullName>
    </alternativeName>
    <alternativeName>
        <fullName>Protein JTV-1</fullName>
    </alternativeName>
</protein>